<name>SIGA_STRCO</name>
<feature type="chain" id="PRO_0000093991" description="RNA polymerase principal sigma factor HrdB">
    <location>
        <begin position="1"/>
        <end position="511"/>
    </location>
</feature>
<feature type="DNA-binding region" description="H-T-H motif" evidence="1">
    <location>
        <begin position="472"/>
        <end position="491"/>
    </location>
</feature>
<feature type="region of interest" description="Disordered" evidence="2">
    <location>
        <begin position="72"/>
        <end position="186"/>
    </location>
</feature>
<feature type="region of interest" description="Binds RNA polymerase-binding protein RbpA">
    <location>
        <begin position="211"/>
        <end position="347"/>
    </location>
</feature>
<feature type="region of interest" description="Sigma-70 factor domain-2" evidence="1">
    <location>
        <begin position="278"/>
        <end position="348"/>
    </location>
</feature>
<feature type="region of interest" description="Sigma-70 factor domain-3" evidence="1">
    <location>
        <begin position="357"/>
        <end position="433"/>
    </location>
</feature>
<feature type="region of interest" description="Sigma-70 factor domain-4" evidence="1">
    <location>
        <begin position="446"/>
        <end position="499"/>
    </location>
</feature>
<feature type="short sequence motif" description="Interaction with polymerase core subunit RpoC">
    <location>
        <begin position="302"/>
        <end position="305"/>
    </location>
</feature>
<feature type="compositionally biased region" description="Basic residues" evidence="2">
    <location>
        <begin position="78"/>
        <end position="93"/>
    </location>
</feature>
<feature type="compositionally biased region" description="Low complexity" evidence="2">
    <location>
        <begin position="94"/>
        <end position="121"/>
    </location>
</feature>
<feature type="compositionally biased region" description="Basic residues" evidence="2">
    <location>
        <begin position="132"/>
        <end position="158"/>
    </location>
</feature>
<feature type="sequence conflict" description="In Ref. 1; CAA37175." evidence="5" ref="1">
    <original>K</original>
    <variation>N</variation>
    <location>
        <position position="100"/>
    </location>
</feature>
<feature type="helix" evidence="7">
    <location>
        <begin position="199"/>
        <end position="207"/>
    </location>
</feature>
<feature type="helix" evidence="6">
    <location>
        <begin position="214"/>
        <end position="222"/>
    </location>
</feature>
<feature type="helix" evidence="6">
    <location>
        <begin position="230"/>
        <end position="251"/>
    </location>
</feature>
<feature type="strand" evidence="7">
    <location>
        <begin position="252"/>
        <end position="254"/>
    </location>
</feature>
<feature type="helix" evidence="6">
    <location>
        <begin position="258"/>
        <end position="291"/>
    </location>
</feature>
<feature type="strand" evidence="6">
    <location>
        <begin position="295"/>
        <end position="298"/>
    </location>
</feature>
<feature type="helix" evidence="6">
    <location>
        <begin position="300"/>
        <end position="316"/>
    </location>
</feature>
<feature type="strand" evidence="6">
    <location>
        <begin position="320"/>
        <end position="322"/>
    </location>
</feature>
<feature type="helix" evidence="6">
    <location>
        <begin position="326"/>
        <end position="345"/>
    </location>
</feature>
<feature type="strand" evidence="6">
    <location>
        <begin position="346"/>
        <end position="349"/>
    </location>
</feature>
<feature type="helix" evidence="6">
    <location>
        <begin position="353"/>
        <end position="373"/>
    </location>
</feature>
<feature type="helix" evidence="6">
    <location>
        <begin position="379"/>
        <end position="386"/>
    </location>
</feature>
<feature type="helix" evidence="6">
    <location>
        <begin position="390"/>
        <end position="399"/>
    </location>
</feature>
<feature type="strand" evidence="7">
    <location>
        <begin position="404"/>
        <end position="407"/>
    </location>
</feature>
<feature type="strand" evidence="6">
    <location>
        <begin position="414"/>
        <end position="417"/>
    </location>
</feature>
<feature type="helix" evidence="6">
    <location>
        <begin position="418"/>
        <end position="420"/>
    </location>
</feature>
<feature type="strand" evidence="6">
    <location>
        <begin position="425"/>
        <end position="427"/>
    </location>
</feature>
<feature type="helix" evidence="6">
    <location>
        <begin position="430"/>
        <end position="449"/>
    </location>
</feature>
<feature type="helix" evidence="6">
    <location>
        <begin position="452"/>
        <end position="461"/>
    </location>
</feature>
<feature type="strand" evidence="6">
    <location>
        <begin position="466"/>
        <end position="468"/>
    </location>
</feature>
<feature type="helix" evidence="6">
    <location>
        <begin position="472"/>
        <end position="475"/>
    </location>
</feature>
<feature type="turn" evidence="6">
    <location>
        <begin position="476"/>
        <end position="478"/>
    </location>
</feature>
<feature type="helix" evidence="6">
    <location>
        <begin position="483"/>
        <end position="497"/>
    </location>
</feature>
<feature type="helix" evidence="6">
    <location>
        <begin position="500"/>
        <end position="502"/>
    </location>
</feature>
<feature type="turn" evidence="6">
    <location>
        <begin position="503"/>
        <end position="506"/>
    </location>
</feature>
<proteinExistence type="evidence at protein level"/>
<evidence type="ECO:0000255" key="1">
    <source>
        <dbReference type="HAMAP-Rule" id="MF_00963"/>
    </source>
</evidence>
<evidence type="ECO:0000256" key="2">
    <source>
        <dbReference type="SAM" id="MobiDB-lite"/>
    </source>
</evidence>
<evidence type="ECO:0000269" key="3">
    <source>
    </source>
</evidence>
<evidence type="ECO:0000269" key="4">
    <source>
    </source>
</evidence>
<evidence type="ECO:0000305" key="5"/>
<evidence type="ECO:0007829" key="6">
    <source>
        <dbReference type="PDB" id="8HVR"/>
    </source>
</evidence>
<evidence type="ECO:0007829" key="7">
    <source>
        <dbReference type="PDB" id="8K60"/>
    </source>
</evidence>
<reference key="1">
    <citation type="journal article" date="1991" name="Gene">
        <title>Sequence of hrdB, an essential gene encoding sigma-like transcription factor of Streptomyces coelicolor A3(2): homology to principal sigma factors.</title>
        <authorList>
            <person name="Shiina T."/>
            <person name="Tanaka K."/>
            <person name="Takahashi H."/>
        </authorList>
    </citation>
    <scope>NUCLEOTIDE SEQUENCE [GENOMIC DNA]</scope>
    <source>
        <strain>A3(2) / NRRL B-16638</strain>
    </source>
</reference>
<reference key="2">
    <citation type="journal article" date="2002" name="Nature">
        <title>Complete genome sequence of the model actinomycete Streptomyces coelicolor A3(2).</title>
        <authorList>
            <person name="Bentley S.D."/>
            <person name="Chater K.F."/>
            <person name="Cerdeno-Tarraga A.-M."/>
            <person name="Challis G.L."/>
            <person name="Thomson N.R."/>
            <person name="James K.D."/>
            <person name="Harris D.E."/>
            <person name="Quail M.A."/>
            <person name="Kieser H."/>
            <person name="Harper D."/>
            <person name="Bateman A."/>
            <person name="Brown S."/>
            <person name="Chandra G."/>
            <person name="Chen C.W."/>
            <person name="Collins M."/>
            <person name="Cronin A."/>
            <person name="Fraser A."/>
            <person name="Goble A."/>
            <person name="Hidalgo J."/>
            <person name="Hornsby T."/>
            <person name="Howarth S."/>
            <person name="Huang C.-H."/>
            <person name="Kieser T."/>
            <person name="Larke L."/>
            <person name="Murphy L.D."/>
            <person name="Oliver K."/>
            <person name="O'Neil S."/>
            <person name="Rabbinowitsch E."/>
            <person name="Rajandream M.A."/>
            <person name="Rutherford K.M."/>
            <person name="Rutter S."/>
            <person name="Seeger K."/>
            <person name="Saunders D."/>
            <person name="Sharp S."/>
            <person name="Squares R."/>
            <person name="Squares S."/>
            <person name="Taylor K."/>
            <person name="Warren T."/>
            <person name="Wietzorrek A."/>
            <person name="Woodward J.R."/>
            <person name="Barrell B.G."/>
            <person name="Parkhill J."/>
            <person name="Hopwood D.A."/>
        </authorList>
    </citation>
    <scope>NUCLEOTIDE SEQUENCE [LARGE SCALE GENOMIC DNA]</scope>
    <source>
        <strain>ATCC BAA-471 / A3(2) / M145</strain>
    </source>
</reference>
<reference key="3">
    <citation type="journal article" date="1988" name="Science">
        <title>Multiple principal sigma factor homologs in eubacteria: identification of the 'rpoD box'.</title>
        <authorList>
            <person name="Tanaka K."/>
            <person name="Shiina T."/>
            <person name="Takahashi H."/>
        </authorList>
    </citation>
    <scope>NUCLEOTIDE SEQUENCE [GENOMIC DNA] OF 306-357</scope>
    <source>
        <strain>A3(2) / NRRL B-16638</strain>
    </source>
</reference>
<reference key="4">
    <citation type="journal article" date="2006" name="Mol. Microbiol.">
        <title>The RNA polymerase-binding protein RbpA confers basal levels of rifampicin resistance on Streptomyces coelicolor.</title>
        <authorList>
            <person name="Newell K.V."/>
            <person name="Thomas D.P."/>
            <person name="Brekasis D."/>
            <person name="Paget M.S."/>
        </authorList>
    </citation>
    <scope>FUNCTION AS A SIGMA FACTOR</scope>
    <scope>STIMULATION BY RBPA</scope>
    <source>
        <strain>ATCC BAA-471 / A3(2) / M145</strain>
    </source>
</reference>
<reference key="5">
    <citation type="journal article" date="2013" name="Nucleic Acids Res.">
        <title>The actinobacterial transcription factor RbpA binds to the principal sigma subunit of RNA polymerase.</title>
        <authorList>
            <person name="Tabib-Salazar A."/>
            <person name="Liu B."/>
            <person name="Doughty P."/>
            <person name="Lewis R.A."/>
            <person name="Ghosh S."/>
            <person name="Parsy M.L."/>
            <person name="Simpson P.J."/>
            <person name="O'Dwyer K."/>
            <person name="Matthews S.J."/>
            <person name="Paget M.S."/>
        </authorList>
    </citation>
    <scope>INTERACTION WITH RBPA</scope>
    <scope>SUBUNIT</scope>
    <source>
        <strain>ATCC BAA-471 / A3(2) / M145</strain>
    </source>
</reference>
<accession>P18183</accession>
<accession>O50539</accession>
<gene>
    <name type="primary">hrdB</name>
    <name type="synonym">sigA</name>
    <name type="ordered locus">SCO5820</name>
    <name type="ORF">SC5B8.10</name>
</gene>
<protein>
    <recommendedName>
        <fullName>RNA polymerase principal sigma factor HrdB</fullName>
    </recommendedName>
    <alternativeName>
        <fullName evidence="1">RNA polymerase sigma factor SigA</fullName>
    </alternativeName>
</protein>
<keyword id="KW-0002">3D-structure</keyword>
<keyword id="KW-0238">DNA-binding</keyword>
<keyword id="KW-1185">Reference proteome</keyword>
<keyword id="KW-0731">Sigma factor</keyword>
<keyword id="KW-0804">Transcription</keyword>
<keyword id="KW-0805">Transcription regulation</keyword>
<dbReference type="EMBL" id="X52983">
    <property type="protein sequence ID" value="CAA37175.1"/>
    <property type="status" value="ALT_INIT"/>
    <property type="molecule type" value="Genomic_DNA"/>
</dbReference>
<dbReference type="EMBL" id="AL939125">
    <property type="protein sequence ID" value="CAA18518.1"/>
    <property type="molecule type" value="Genomic_DNA"/>
</dbReference>
<dbReference type="EMBL" id="AJ003022">
    <property type="protein sequence ID" value="CAA05813.1"/>
    <property type="molecule type" value="Genomic_DNA"/>
</dbReference>
<dbReference type="PIR" id="S11712">
    <property type="entry name" value="S11712"/>
</dbReference>
<dbReference type="PIR" id="T35194">
    <property type="entry name" value="T35194"/>
</dbReference>
<dbReference type="RefSeq" id="NP_629943.1">
    <property type="nucleotide sequence ID" value="NC_003888.3"/>
</dbReference>
<dbReference type="RefSeq" id="WP_003973202.1">
    <property type="nucleotide sequence ID" value="NZ_VNID01000007.1"/>
</dbReference>
<dbReference type="PDB" id="7VPZ">
    <property type="method" value="EM"/>
    <property type="resolution" value="4.14 A"/>
    <property type="chains" value="F=1-511"/>
</dbReference>
<dbReference type="PDB" id="7X74">
    <property type="method" value="EM"/>
    <property type="resolution" value="3.70 A"/>
    <property type="chains" value="F=1-511"/>
</dbReference>
<dbReference type="PDB" id="7X75">
    <property type="method" value="EM"/>
    <property type="resolution" value="3.45 A"/>
    <property type="chains" value="F=1-511"/>
</dbReference>
<dbReference type="PDB" id="7X76">
    <property type="method" value="EM"/>
    <property type="resolution" value="3.67 A"/>
    <property type="chains" value="F=1-511"/>
</dbReference>
<dbReference type="PDB" id="8HVR">
    <property type="method" value="EM"/>
    <property type="resolution" value="3.35 A"/>
    <property type="chains" value="F=1-511"/>
</dbReference>
<dbReference type="PDB" id="8JKE">
    <property type="method" value="EM"/>
    <property type="resolution" value="3.67 A"/>
    <property type="chains" value="F=1-511"/>
</dbReference>
<dbReference type="PDB" id="8K60">
    <property type="method" value="EM"/>
    <property type="resolution" value="3.40 A"/>
    <property type="chains" value="F=1-511"/>
</dbReference>
<dbReference type="PDBsum" id="7VPZ"/>
<dbReference type="PDBsum" id="7X74"/>
<dbReference type="PDBsum" id="7X75"/>
<dbReference type="PDBsum" id="7X76"/>
<dbReference type="PDBsum" id="8HVR"/>
<dbReference type="PDBsum" id="8JKE"/>
<dbReference type="PDBsum" id="8K60"/>
<dbReference type="EMDB" id="EMD-32077"/>
<dbReference type="EMDB" id="EMD-33031"/>
<dbReference type="EMDB" id="EMD-33032"/>
<dbReference type="EMDB" id="EMD-33033"/>
<dbReference type="EMDB" id="EMD-35047"/>
<dbReference type="EMDB" id="EMD-36370"/>
<dbReference type="EMDB" id="EMD-36914"/>
<dbReference type="SMR" id="P18183"/>
<dbReference type="FunCoup" id="P18183">
    <property type="interactions" value="200"/>
</dbReference>
<dbReference type="STRING" id="100226.gene:17763480"/>
<dbReference type="PaxDb" id="100226-SCO5820"/>
<dbReference type="KEGG" id="sco:SCO5820"/>
<dbReference type="PATRIC" id="fig|100226.15.peg.5915"/>
<dbReference type="eggNOG" id="COG0568">
    <property type="taxonomic scope" value="Bacteria"/>
</dbReference>
<dbReference type="HOGENOM" id="CLU_014793_2_2_11"/>
<dbReference type="InParanoid" id="P18183"/>
<dbReference type="OrthoDB" id="9809557at2"/>
<dbReference type="PhylomeDB" id="P18183"/>
<dbReference type="Proteomes" id="UP000001973">
    <property type="component" value="Chromosome"/>
</dbReference>
<dbReference type="GO" id="GO:0005737">
    <property type="term" value="C:cytoplasm"/>
    <property type="evidence" value="ECO:0007669"/>
    <property type="project" value="UniProtKB-UniRule"/>
</dbReference>
<dbReference type="GO" id="GO:0001108">
    <property type="term" value="F:bacterial-type RNA polymerase holo enzyme binding"/>
    <property type="evidence" value="ECO:0000314"/>
    <property type="project" value="UniProtKB"/>
</dbReference>
<dbReference type="GO" id="GO:0003677">
    <property type="term" value="F:DNA binding"/>
    <property type="evidence" value="ECO:0007669"/>
    <property type="project" value="UniProtKB-UniRule"/>
</dbReference>
<dbReference type="GO" id="GO:0016987">
    <property type="term" value="F:sigma factor activity"/>
    <property type="evidence" value="ECO:0000314"/>
    <property type="project" value="UniProtKB"/>
</dbReference>
<dbReference type="GO" id="GO:0006352">
    <property type="term" value="P:DNA-templated transcription initiation"/>
    <property type="evidence" value="ECO:0007669"/>
    <property type="project" value="UniProtKB-UniRule"/>
</dbReference>
<dbReference type="CDD" id="cd06171">
    <property type="entry name" value="Sigma70_r4"/>
    <property type="match status" value="1"/>
</dbReference>
<dbReference type="FunFam" id="1.10.10.10:FF:000002">
    <property type="entry name" value="RNA polymerase sigma factor SigA"/>
    <property type="match status" value="1"/>
</dbReference>
<dbReference type="FunFam" id="1.10.10.10:FF:000004">
    <property type="entry name" value="RNA polymerase sigma factor SigA"/>
    <property type="match status" value="1"/>
</dbReference>
<dbReference type="FunFam" id="1.10.601.10:FF:000001">
    <property type="entry name" value="RNA polymerase sigma factor SigA"/>
    <property type="match status" value="1"/>
</dbReference>
<dbReference type="FunFam" id="1.10.601.10:FF:000003">
    <property type="entry name" value="RNA polymerase sigma factor SigA"/>
    <property type="match status" value="1"/>
</dbReference>
<dbReference type="Gene3D" id="1.10.601.10">
    <property type="entry name" value="RNA Polymerase Primary Sigma Factor"/>
    <property type="match status" value="2"/>
</dbReference>
<dbReference type="Gene3D" id="1.10.10.10">
    <property type="entry name" value="Winged helix-like DNA-binding domain superfamily/Winged helix DNA-binding domain"/>
    <property type="match status" value="2"/>
</dbReference>
<dbReference type="HAMAP" id="MF_00963">
    <property type="entry name" value="Sigma70_RpoD_SigA"/>
    <property type="match status" value="1"/>
</dbReference>
<dbReference type="InterPro" id="IPR014284">
    <property type="entry name" value="RNA_pol_sigma-70_dom"/>
</dbReference>
<dbReference type="InterPro" id="IPR000943">
    <property type="entry name" value="RNA_pol_sigma70"/>
</dbReference>
<dbReference type="InterPro" id="IPR009042">
    <property type="entry name" value="RNA_pol_sigma70_r1_2"/>
</dbReference>
<dbReference type="InterPro" id="IPR007627">
    <property type="entry name" value="RNA_pol_sigma70_r2"/>
</dbReference>
<dbReference type="InterPro" id="IPR007624">
    <property type="entry name" value="RNA_pol_sigma70_r3"/>
</dbReference>
<dbReference type="InterPro" id="IPR007630">
    <property type="entry name" value="RNA_pol_sigma70_r4"/>
</dbReference>
<dbReference type="InterPro" id="IPR013325">
    <property type="entry name" value="RNA_pol_sigma_r2"/>
</dbReference>
<dbReference type="InterPro" id="IPR013324">
    <property type="entry name" value="RNA_pol_sigma_r3/r4-like"/>
</dbReference>
<dbReference type="InterPro" id="IPR012760">
    <property type="entry name" value="RNA_pol_sigma_RpoD_C"/>
</dbReference>
<dbReference type="InterPro" id="IPR050239">
    <property type="entry name" value="Sigma-70_RNA_pol_init_factors"/>
</dbReference>
<dbReference type="InterPro" id="IPR028630">
    <property type="entry name" value="Sigma70_RpoD"/>
</dbReference>
<dbReference type="InterPro" id="IPR036388">
    <property type="entry name" value="WH-like_DNA-bd_sf"/>
</dbReference>
<dbReference type="NCBIfam" id="NF004561">
    <property type="entry name" value="PRK05901.1-3"/>
    <property type="match status" value="1"/>
</dbReference>
<dbReference type="NCBIfam" id="NF005920">
    <property type="entry name" value="PRK07921.1"/>
    <property type="match status" value="1"/>
</dbReference>
<dbReference type="NCBIfam" id="TIGR02393">
    <property type="entry name" value="RpoD_Cterm"/>
    <property type="match status" value="1"/>
</dbReference>
<dbReference type="NCBIfam" id="TIGR02937">
    <property type="entry name" value="sigma70-ECF"/>
    <property type="match status" value="1"/>
</dbReference>
<dbReference type="PANTHER" id="PTHR30603:SF59">
    <property type="entry name" value="RNA POLYMERASE PRINCIPAL SIGMA FACTOR HRDA"/>
    <property type="match status" value="1"/>
</dbReference>
<dbReference type="PANTHER" id="PTHR30603">
    <property type="entry name" value="RNA POLYMERASE SIGMA FACTOR RPO"/>
    <property type="match status" value="1"/>
</dbReference>
<dbReference type="Pfam" id="PF00140">
    <property type="entry name" value="Sigma70_r1_2"/>
    <property type="match status" value="1"/>
</dbReference>
<dbReference type="Pfam" id="PF04542">
    <property type="entry name" value="Sigma70_r2"/>
    <property type="match status" value="1"/>
</dbReference>
<dbReference type="Pfam" id="PF04539">
    <property type="entry name" value="Sigma70_r3"/>
    <property type="match status" value="1"/>
</dbReference>
<dbReference type="Pfam" id="PF04545">
    <property type="entry name" value="Sigma70_r4"/>
    <property type="match status" value="1"/>
</dbReference>
<dbReference type="PRINTS" id="PR00046">
    <property type="entry name" value="SIGMA70FCT"/>
</dbReference>
<dbReference type="SUPFAM" id="SSF88946">
    <property type="entry name" value="Sigma2 domain of RNA polymerase sigma factors"/>
    <property type="match status" value="1"/>
</dbReference>
<dbReference type="SUPFAM" id="SSF88659">
    <property type="entry name" value="Sigma3 and sigma4 domains of RNA polymerase sigma factors"/>
    <property type="match status" value="2"/>
</dbReference>
<dbReference type="PROSITE" id="PS00715">
    <property type="entry name" value="SIGMA70_1"/>
    <property type="match status" value="1"/>
</dbReference>
<dbReference type="PROSITE" id="PS00716">
    <property type="entry name" value="SIGMA70_2"/>
    <property type="match status" value="1"/>
</dbReference>
<organism>
    <name type="scientific">Streptomyces coelicolor (strain ATCC BAA-471 / A3(2) / M145)</name>
    <dbReference type="NCBI Taxonomy" id="100226"/>
    <lineage>
        <taxon>Bacteria</taxon>
        <taxon>Bacillati</taxon>
        <taxon>Actinomycetota</taxon>
        <taxon>Actinomycetes</taxon>
        <taxon>Kitasatosporales</taxon>
        <taxon>Streptomycetaceae</taxon>
        <taxon>Streptomyces</taxon>
        <taxon>Streptomyces albidoflavus group</taxon>
    </lineage>
</organism>
<sequence length="511" mass="55935">MSASTSRTLPPEIAESVSVMALIERGKAEGQIAGDDVRRAFEADQIPATQWKNVLRSLNQILEEEGVTLMVSAAEPKRTRKSVAAKSPAKRTATKAVAAKPVTSRKATAPAAPAAPATEPAAVEEEAPAKKAAAKKTTAKKATAKKTTAKKAAAKKTTAKKEDGELLEDEATEEPKAATEEPEGTENAGFVLSDEDEDDAPAQQVAAAGATADPVKDYLKQIGKVPLLNAEQEVELAKRIEAGLFAEDKLANSDKLAPKLKRELEIIAEDGRRAKNHLLEANLRLVVSLAKRYTGRGMLFLDLIQEGNLGLIRAVEKFDYTKGYKFSTYATWWIRQAITRAMADQARTIRIPVHMVEVINKLARVQRQMLQDLGREPTPEELAKELDMTPEKVIEVQKYGREPISLHTPLGEDGDSEFGDLIEDSEAVVPADAVSFTLLQEQLHSVLDTLSEREAGVVSMRFGLTDGQPKTLDEIGKVYGVTRERIRQIESKTMSKLRHPSRSQVLRDYLD</sequence>
<comment type="function">
    <text evidence="1 3">Sigma factors are initiation factors that promote the attachment of RNA polymerase to specific initiation sites and are then released. This sigma factor is the primary sigma factor during exponential growth. Its activity is stimulated by RbpA.</text>
</comment>
<comment type="subunit">
    <text evidence="4 5">Homotrimer (Potential). interacts transiently with the RNA polymerase core complex. Interacts with RNA polymerase-binding protein RbpA via its sigma-2 region (residues 211-347) in a free form.</text>
</comment>
<comment type="similarity">
    <text evidence="5">Belongs to the sigma-70 factor family.</text>
</comment>
<comment type="sequence caution" evidence="5">
    <conflict type="erroneous initiation">
        <sequence resource="EMBL-CDS" id="CAA37175"/>
    </conflict>
    <text>Truncated N-terminus.</text>
</comment>